<sequence length="433" mass="49567">MRAEARGGLERFCSAGKGRGLRALRPFHVGDLLFSCPAYACVLTVGERGHHCECCFARKEGLSKCGRCKQAFYCDVECQKEDWPLHKLECSSMVVLGENWNPSETVRLTARILAKQKIHPERTPSEKLLAVREFESHLDKLDNEKKDLIQSDIAALHQFYSKYLEFPDHSSLVVLFAQVNCNGFTIEDEELSHLGSAIFPDVALMNHSCCPNVIVTYKGTLAEVRAVQEIHPGDEVFTSYIDLLYPTEDRNDRLRDSYFFTCECRECTTKDKDKAKVEVRKLSSPPQAEAIRDMVRYARNVIEEFRRAKHYKSPSELLEICELSQEKMSSVFEDSNVYMLHMMYQAMGVCLYMQDWEGALKYGQKIIKPYSKHYPVYSLNVASMWLKLGRLYMGLENKAAGEKALKKAIAIMEVAHGKDHPYISEIKQEIESH</sequence>
<proteinExistence type="evidence at protein level"/>
<reference key="1">
    <citation type="journal article" date="2005" name="Science">
        <title>The transcriptional landscape of the mammalian genome.</title>
        <authorList>
            <person name="Carninci P."/>
            <person name="Kasukawa T."/>
            <person name="Katayama S."/>
            <person name="Gough J."/>
            <person name="Frith M.C."/>
            <person name="Maeda N."/>
            <person name="Oyama R."/>
            <person name="Ravasi T."/>
            <person name="Lenhard B."/>
            <person name="Wells C."/>
            <person name="Kodzius R."/>
            <person name="Shimokawa K."/>
            <person name="Bajic V.B."/>
            <person name="Brenner S.E."/>
            <person name="Batalov S."/>
            <person name="Forrest A.R."/>
            <person name="Zavolan M."/>
            <person name="Davis M.J."/>
            <person name="Wilming L.G."/>
            <person name="Aidinis V."/>
            <person name="Allen J.E."/>
            <person name="Ambesi-Impiombato A."/>
            <person name="Apweiler R."/>
            <person name="Aturaliya R.N."/>
            <person name="Bailey T.L."/>
            <person name="Bansal M."/>
            <person name="Baxter L."/>
            <person name="Beisel K.W."/>
            <person name="Bersano T."/>
            <person name="Bono H."/>
            <person name="Chalk A.M."/>
            <person name="Chiu K.P."/>
            <person name="Choudhary V."/>
            <person name="Christoffels A."/>
            <person name="Clutterbuck D.R."/>
            <person name="Crowe M.L."/>
            <person name="Dalla E."/>
            <person name="Dalrymple B.P."/>
            <person name="de Bono B."/>
            <person name="Della Gatta G."/>
            <person name="di Bernardo D."/>
            <person name="Down T."/>
            <person name="Engstrom P."/>
            <person name="Fagiolini M."/>
            <person name="Faulkner G."/>
            <person name="Fletcher C.F."/>
            <person name="Fukushima T."/>
            <person name="Furuno M."/>
            <person name="Futaki S."/>
            <person name="Gariboldi M."/>
            <person name="Georgii-Hemming P."/>
            <person name="Gingeras T.R."/>
            <person name="Gojobori T."/>
            <person name="Green R.E."/>
            <person name="Gustincich S."/>
            <person name="Harbers M."/>
            <person name="Hayashi Y."/>
            <person name="Hensch T.K."/>
            <person name="Hirokawa N."/>
            <person name="Hill D."/>
            <person name="Huminiecki L."/>
            <person name="Iacono M."/>
            <person name="Ikeo K."/>
            <person name="Iwama A."/>
            <person name="Ishikawa T."/>
            <person name="Jakt M."/>
            <person name="Kanapin A."/>
            <person name="Katoh M."/>
            <person name="Kawasawa Y."/>
            <person name="Kelso J."/>
            <person name="Kitamura H."/>
            <person name="Kitano H."/>
            <person name="Kollias G."/>
            <person name="Krishnan S.P."/>
            <person name="Kruger A."/>
            <person name="Kummerfeld S.K."/>
            <person name="Kurochkin I.V."/>
            <person name="Lareau L.F."/>
            <person name="Lazarevic D."/>
            <person name="Lipovich L."/>
            <person name="Liu J."/>
            <person name="Liuni S."/>
            <person name="McWilliam S."/>
            <person name="Madan Babu M."/>
            <person name="Madera M."/>
            <person name="Marchionni L."/>
            <person name="Matsuda H."/>
            <person name="Matsuzawa S."/>
            <person name="Miki H."/>
            <person name="Mignone F."/>
            <person name="Miyake S."/>
            <person name="Morris K."/>
            <person name="Mottagui-Tabar S."/>
            <person name="Mulder N."/>
            <person name="Nakano N."/>
            <person name="Nakauchi H."/>
            <person name="Ng P."/>
            <person name="Nilsson R."/>
            <person name="Nishiguchi S."/>
            <person name="Nishikawa S."/>
            <person name="Nori F."/>
            <person name="Ohara O."/>
            <person name="Okazaki Y."/>
            <person name="Orlando V."/>
            <person name="Pang K.C."/>
            <person name="Pavan W.J."/>
            <person name="Pavesi G."/>
            <person name="Pesole G."/>
            <person name="Petrovsky N."/>
            <person name="Piazza S."/>
            <person name="Reed J."/>
            <person name="Reid J.F."/>
            <person name="Ring B.Z."/>
            <person name="Ringwald M."/>
            <person name="Rost B."/>
            <person name="Ruan Y."/>
            <person name="Salzberg S.L."/>
            <person name="Sandelin A."/>
            <person name="Schneider C."/>
            <person name="Schoenbach C."/>
            <person name="Sekiguchi K."/>
            <person name="Semple C.A."/>
            <person name="Seno S."/>
            <person name="Sessa L."/>
            <person name="Sheng Y."/>
            <person name="Shibata Y."/>
            <person name="Shimada H."/>
            <person name="Shimada K."/>
            <person name="Silva D."/>
            <person name="Sinclair B."/>
            <person name="Sperling S."/>
            <person name="Stupka E."/>
            <person name="Sugiura K."/>
            <person name="Sultana R."/>
            <person name="Takenaka Y."/>
            <person name="Taki K."/>
            <person name="Tammoja K."/>
            <person name="Tan S.L."/>
            <person name="Tang S."/>
            <person name="Taylor M.S."/>
            <person name="Tegner J."/>
            <person name="Teichmann S.A."/>
            <person name="Ueda H.R."/>
            <person name="van Nimwegen E."/>
            <person name="Verardo R."/>
            <person name="Wei C.L."/>
            <person name="Yagi K."/>
            <person name="Yamanishi H."/>
            <person name="Zabarovsky E."/>
            <person name="Zhu S."/>
            <person name="Zimmer A."/>
            <person name="Hide W."/>
            <person name="Bult C."/>
            <person name="Grimmond S.M."/>
            <person name="Teasdale R.D."/>
            <person name="Liu E.T."/>
            <person name="Brusic V."/>
            <person name="Quackenbush J."/>
            <person name="Wahlestedt C."/>
            <person name="Mattick J.S."/>
            <person name="Hume D.A."/>
            <person name="Kai C."/>
            <person name="Sasaki D."/>
            <person name="Tomaru Y."/>
            <person name="Fukuda S."/>
            <person name="Kanamori-Katayama M."/>
            <person name="Suzuki M."/>
            <person name="Aoki J."/>
            <person name="Arakawa T."/>
            <person name="Iida J."/>
            <person name="Imamura K."/>
            <person name="Itoh M."/>
            <person name="Kato T."/>
            <person name="Kawaji H."/>
            <person name="Kawagashira N."/>
            <person name="Kawashima T."/>
            <person name="Kojima M."/>
            <person name="Kondo S."/>
            <person name="Konno H."/>
            <person name="Nakano K."/>
            <person name="Ninomiya N."/>
            <person name="Nishio T."/>
            <person name="Okada M."/>
            <person name="Plessy C."/>
            <person name="Shibata K."/>
            <person name="Shiraki T."/>
            <person name="Suzuki S."/>
            <person name="Tagami M."/>
            <person name="Waki K."/>
            <person name="Watahiki A."/>
            <person name="Okamura-Oho Y."/>
            <person name="Suzuki H."/>
            <person name="Kawai J."/>
            <person name="Hayashizaki Y."/>
        </authorList>
    </citation>
    <scope>NUCLEOTIDE SEQUENCE [LARGE SCALE MRNA]</scope>
    <source>
        <strain>C57BL/6J</strain>
        <tissue>Bone marrow</tissue>
    </source>
</reference>
<reference key="2">
    <citation type="journal article" date="2004" name="Genome Res.">
        <title>The status, quality, and expansion of the NIH full-length cDNA project: the Mammalian Gene Collection (MGC).</title>
        <authorList>
            <consortium name="The MGC Project Team"/>
        </authorList>
    </citation>
    <scope>NUCLEOTIDE SEQUENCE [LARGE SCALE MRNA]</scope>
</reference>
<reference key="3">
    <citation type="journal article" date="2006" name="Mol. Cancer">
        <title>Identification and characterization of Smyd2: a split SET/MYND domain-containing histone H3 lysine 36-specific methyltransferase that interacts with the Sin3 histone deacetylase complex.</title>
        <authorList>
            <person name="Brown M.A."/>
            <person name="Sims R.J. III"/>
            <person name="Gottlieb P.D."/>
            <person name="Tucker P.W."/>
        </authorList>
    </citation>
    <scope>FUNCTION</scope>
    <scope>SUBCELLULAR LOCATION</scope>
    <scope>MUTAGENESIS OF TYR-240</scope>
    <scope>INTERACTION WITH SIN3A AND HDAC1</scope>
</reference>
<reference key="4">
    <citation type="journal article" date="2008" name="Mol. Cell. Proteomics">
        <title>The tale of two domains: proteomics and genomics analysis of SMYD2, a new histone methyltransferase.</title>
        <authorList>
            <person name="Abu-Farha M."/>
            <person name="Lambert J.P."/>
            <person name="Al-Madhoun A.S."/>
            <person name="Elisma F."/>
            <person name="Skerjanc I.S."/>
            <person name="Figeys D."/>
        </authorList>
    </citation>
    <scope>CAUTION</scope>
</reference>
<reference key="5">
    <citation type="journal article" date="2010" name="PLoS ONE">
        <title>Cardiac deletion of Smyd2 is dispensable for mouse heart development.</title>
        <authorList>
            <person name="Diehl F."/>
            <person name="Brown M.A."/>
            <person name="van Amerongen M.J."/>
            <person name="Novoyatleva T."/>
            <person name="Wietelmann A."/>
            <person name="Harriss J."/>
            <person name="Ferrazzi F."/>
            <person name="Bottger T."/>
            <person name="Harvey R.P."/>
            <person name="Tucker P.W."/>
            <person name="Engel F.B."/>
        </authorList>
    </citation>
    <scope>TISSUE SPECIFICITY</scope>
    <scope>INTERACTION WITH RNA POLYMERASE II AND HELZ</scope>
    <scope>SUBCELLULAR LOCATION</scope>
</reference>
<dbReference type="EC" id="2.1.1.-" evidence="2"/>
<dbReference type="EC" id="2.1.1.354" evidence="2"/>
<dbReference type="EMBL" id="AK150857">
    <property type="protein sequence ID" value="BAE29912.1"/>
    <property type="status" value="ALT_SEQ"/>
    <property type="molecule type" value="mRNA"/>
</dbReference>
<dbReference type="EMBL" id="BC023119">
    <property type="protein sequence ID" value="AAH23119.1"/>
    <property type="molecule type" value="mRNA"/>
</dbReference>
<dbReference type="CCDS" id="CCDS35821.1"/>
<dbReference type="RefSeq" id="NP_081072.1">
    <property type="nucleotide sequence ID" value="NM_026796.2"/>
</dbReference>
<dbReference type="PDB" id="3QWV">
    <property type="method" value="X-ray"/>
    <property type="resolution" value="2.03 A"/>
    <property type="chains" value="A=1-433"/>
</dbReference>
<dbReference type="PDB" id="3QWW">
    <property type="method" value="X-ray"/>
    <property type="resolution" value="1.80 A"/>
    <property type="chains" value="A=1-433"/>
</dbReference>
<dbReference type="PDBsum" id="3QWV"/>
<dbReference type="PDBsum" id="3QWW"/>
<dbReference type="SMR" id="Q8R5A0"/>
<dbReference type="BioGRID" id="230559">
    <property type="interactions" value="4"/>
</dbReference>
<dbReference type="DIP" id="DIP-60503N"/>
<dbReference type="FunCoup" id="Q8R5A0">
    <property type="interactions" value="1476"/>
</dbReference>
<dbReference type="IntAct" id="Q8R5A0">
    <property type="interactions" value="1"/>
</dbReference>
<dbReference type="STRING" id="10090.ENSMUSP00000027897"/>
<dbReference type="iPTMnet" id="Q8R5A0"/>
<dbReference type="PhosphoSitePlus" id="Q8R5A0"/>
<dbReference type="jPOST" id="Q8R5A0"/>
<dbReference type="PaxDb" id="10090-ENSMUSP00000027897"/>
<dbReference type="PeptideAtlas" id="Q8R5A0"/>
<dbReference type="ProteomicsDB" id="261589"/>
<dbReference type="Pumba" id="Q8R5A0"/>
<dbReference type="Antibodypedia" id="34617">
    <property type="antibodies" value="338 antibodies from 37 providers"/>
</dbReference>
<dbReference type="DNASU" id="226830"/>
<dbReference type="Ensembl" id="ENSMUST00000027897.8">
    <property type="protein sequence ID" value="ENSMUSP00000027897.8"/>
    <property type="gene ID" value="ENSMUSG00000026603.14"/>
</dbReference>
<dbReference type="GeneID" id="226830"/>
<dbReference type="KEGG" id="mmu:226830"/>
<dbReference type="UCSC" id="uc007eax.1">
    <property type="organism name" value="mouse"/>
</dbReference>
<dbReference type="AGR" id="MGI:1915889"/>
<dbReference type="CTD" id="56950"/>
<dbReference type="MGI" id="MGI:1915889">
    <property type="gene designation" value="Smyd2"/>
</dbReference>
<dbReference type="VEuPathDB" id="HostDB:ENSMUSG00000026603"/>
<dbReference type="eggNOG" id="KOG2084">
    <property type="taxonomic scope" value="Eukaryota"/>
</dbReference>
<dbReference type="GeneTree" id="ENSGT00940000157082"/>
<dbReference type="HOGENOM" id="CLU_018406_0_0_1"/>
<dbReference type="InParanoid" id="Q8R5A0"/>
<dbReference type="OMA" id="HYKSPGE"/>
<dbReference type="OrthoDB" id="5945798at2759"/>
<dbReference type="PhylomeDB" id="Q8R5A0"/>
<dbReference type="TreeFam" id="TF106487"/>
<dbReference type="Reactome" id="R-MMU-3214841">
    <property type="pathway name" value="PKMTs methylate histone lysines"/>
</dbReference>
<dbReference type="Reactome" id="R-MMU-6804760">
    <property type="pathway name" value="Regulation of TP53 Activity through Methylation"/>
</dbReference>
<dbReference type="BioGRID-ORCS" id="226830">
    <property type="hits" value="3 hits in 83 CRISPR screens"/>
</dbReference>
<dbReference type="ChiTaRS" id="Smyd2">
    <property type="organism name" value="mouse"/>
</dbReference>
<dbReference type="EvolutionaryTrace" id="Q8R5A0"/>
<dbReference type="PRO" id="PR:Q8R5A0"/>
<dbReference type="Proteomes" id="UP000000589">
    <property type="component" value="Chromosome 1"/>
</dbReference>
<dbReference type="RNAct" id="Q8R5A0">
    <property type="molecule type" value="protein"/>
</dbReference>
<dbReference type="Bgee" id="ENSMUSG00000026603">
    <property type="expression patterns" value="Expressed in gastrocnemius and 266 other cell types or tissues"/>
</dbReference>
<dbReference type="GO" id="GO:0005737">
    <property type="term" value="C:cytoplasm"/>
    <property type="evidence" value="ECO:0000314"/>
    <property type="project" value="UniProtKB"/>
</dbReference>
<dbReference type="GO" id="GO:0005829">
    <property type="term" value="C:cytosol"/>
    <property type="evidence" value="ECO:0000314"/>
    <property type="project" value="UniProtKB"/>
</dbReference>
<dbReference type="GO" id="GO:0005634">
    <property type="term" value="C:nucleus"/>
    <property type="evidence" value="ECO:0000314"/>
    <property type="project" value="UniProtKB"/>
</dbReference>
<dbReference type="GO" id="GO:0046975">
    <property type="term" value="F:histone H3K36 methyltransferase activity"/>
    <property type="evidence" value="ECO:0000314"/>
    <property type="project" value="UniProtKB"/>
</dbReference>
<dbReference type="GO" id="GO:0140999">
    <property type="term" value="F:histone H3K4 trimethyltransferase activity"/>
    <property type="evidence" value="ECO:0007669"/>
    <property type="project" value="UniProtKB-EC"/>
</dbReference>
<dbReference type="GO" id="GO:0002039">
    <property type="term" value="F:p53 binding"/>
    <property type="evidence" value="ECO:0007669"/>
    <property type="project" value="Ensembl"/>
</dbReference>
<dbReference type="GO" id="GO:0016279">
    <property type="term" value="F:protein-lysine N-methyltransferase activity"/>
    <property type="evidence" value="ECO:0000250"/>
    <property type="project" value="UniProtKB"/>
</dbReference>
<dbReference type="GO" id="GO:0000993">
    <property type="term" value="F:RNA polymerase II complex binding"/>
    <property type="evidence" value="ECO:0000314"/>
    <property type="project" value="UniProtKB"/>
</dbReference>
<dbReference type="GO" id="GO:0008270">
    <property type="term" value="F:zinc ion binding"/>
    <property type="evidence" value="ECO:0007669"/>
    <property type="project" value="UniProtKB-KW"/>
</dbReference>
<dbReference type="GO" id="GO:0007507">
    <property type="term" value="P:heart development"/>
    <property type="evidence" value="ECO:0007669"/>
    <property type="project" value="Ensembl"/>
</dbReference>
<dbReference type="GO" id="GO:0008285">
    <property type="term" value="P:negative regulation of cell population proliferation"/>
    <property type="evidence" value="ECO:0000314"/>
    <property type="project" value="UniProtKB"/>
</dbReference>
<dbReference type="GO" id="GO:0000122">
    <property type="term" value="P:negative regulation of transcription by RNA polymerase II"/>
    <property type="evidence" value="ECO:0000250"/>
    <property type="project" value="UniProtKB"/>
</dbReference>
<dbReference type="GO" id="GO:0018027">
    <property type="term" value="P:peptidyl-lysine dimethylation"/>
    <property type="evidence" value="ECO:0000314"/>
    <property type="project" value="UniProtKB"/>
</dbReference>
<dbReference type="GO" id="GO:0018026">
    <property type="term" value="P:peptidyl-lysine monomethylation"/>
    <property type="evidence" value="ECO:0000250"/>
    <property type="project" value="UniProtKB"/>
</dbReference>
<dbReference type="GO" id="GO:0043516">
    <property type="term" value="P:regulation of DNA damage response, signal transduction by p53 class mediator"/>
    <property type="evidence" value="ECO:0000250"/>
    <property type="project" value="UniProtKB"/>
</dbReference>
<dbReference type="CDD" id="cd19202">
    <property type="entry name" value="SET_SMYD2"/>
    <property type="match status" value="1"/>
</dbReference>
<dbReference type="FunFam" id="2.170.270.10:FF:000013">
    <property type="entry name" value="Histone-lysine N-methyltransferase SMYD1 isoform 1"/>
    <property type="match status" value="1"/>
</dbReference>
<dbReference type="FunFam" id="6.10.140.2220:FF:000013">
    <property type="entry name" value="N-lysine methyltransferase SMYD2 isoform X1"/>
    <property type="match status" value="1"/>
</dbReference>
<dbReference type="FunFam" id="1.25.40.10:FF:000249">
    <property type="entry name" value="N-lysine methyltransferase SMYD2 isoform X2"/>
    <property type="match status" value="1"/>
</dbReference>
<dbReference type="Gene3D" id="6.10.140.2220">
    <property type="match status" value="1"/>
</dbReference>
<dbReference type="Gene3D" id="2.170.270.10">
    <property type="entry name" value="SET domain"/>
    <property type="match status" value="2"/>
</dbReference>
<dbReference type="Gene3D" id="1.25.40.10">
    <property type="entry name" value="Tetratricopeptide repeat domain"/>
    <property type="match status" value="1"/>
</dbReference>
<dbReference type="InterPro" id="IPR050869">
    <property type="entry name" value="H3K4_H4K5_MeTrfase"/>
</dbReference>
<dbReference type="InterPro" id="IPR001214">
    <property type="entry name" value="SET_dom"/>
</dbReference>
<dbReference type="InterPro" id="IPR046341">
    <property type="entry name" value="SET_dom_sf"/>
</dbReference>
<dbReference type="InterPro" id="IPR044419">
    <property type="entry name" value="SMYD2_SET"/>
</dbReference>
<dbReference type="InterPro" id="IPR011990">
    <property type="entry name" value="TPR-like_helical_dom_sf"/>
</dbReference>
<dbReference type="InterPro" id="IPR002893">
    <property type="entry name" value="Znf_MYND"/>
</dbReference>
<dbReference type="PANTHER" id="PTHR12197">
    <property type="entry name" value="HISTONE-LYSINE N-METHYLTRANSFERASE SMYD"/>
    <property type="match status" value="1"/>
</dbReference>
<dbReference type="PANTHER" id="PTHR12197:SF193">
    <property type="entry name" value="N-LYSINE METHYLTRANSFERASE SMYD2"/>
    <property type="match status" value="1"/>
</dbReference>
<dbReference type="Pfam" id="PF00856">
    <property type="entry name" value="SET"/>
    <property type="match status" value="1"/>
</dbReference>
<dbReference type="Pfam" id="PF01753">
    <property type="entry name" value="zf-MYND"/>
    <property type="match status" value="1"/>
</dbReference>
<dbReference type="SUPFAM" id="SSF82199">
    <property type="entry name" value="SET domain"/>
    <property type="match status" value="1"/>
</dbReference>
<dbReference type="SUPFAM" id="SSF48452">
    <property type="entry name" value="TPR-like"/>
    <property type="match status" value="1"/>
</dbReference>
<dbReference type="PROSITE" id="PS50280">
    <property type="entry name" value="SET"/>
    <property type="match status" value="1"/>
</dbReference>
<dbReference type="PROSITE" id="PS01360">
    <property type="entry name" value="ZF_MYND_1"/>
    <property type="match status" value="1"/>
</dbReference>
<dbReference type="PROSITE" id="PS50865">
    <property type="entry name" value="ZF_MYND_2"/>
    <property type="match status" value="1"/>
</dbReference>
<gene>
    <name type="primary">Smyd2</name>
</gene>
<protein>
    <recommendedName>
        <fullName>N-lysine methyltransferase SMYD2</fullName>
        <ecNumber evidence="2">2.1.1.-</ecNumber>
    </recommendedName>
    <alternativeName>
        <fullName>Histone methyltransferase SMYD2</fullName>
        <ecNumber evidence="2">2.1.1.354</ecNumber>
    </alternativeName>
    <alternativeName>
        <fullName>SET and MYND domain-containing protein 2</fullName>
    </alternativeName>
</protein>
<accession>Q8R5A0</accession>
<accession>Q3UBQ2</accession>
<feature type="chain" id="PRO_0000218310" description="N-lysine methyltransferase SMYD2">
    <location>
        <begin position="1"/>
        <end position="433"/>
    </location>
</feature>
<feature type="domain" description="SET" evidence="4">
    <location>
        <begin position="7"/>
        <end position="241"/>
    </location>
</feature>
<feature type="zinc finger region" description="MYND-type" evidence="3">
    <location>
        <begin position="52"/>
        <end position="90"/>
    </location>
</feature>
<feature type="binding site" evidence="1">
    <location>
        <begin position="17"/>
        <end position="19"/>
    </location>
    <ligand>
        <name>S-adenosyl-L-methionine</name>
        <dbReference type="ChEBI" id="CHEBI:59789"/>
    </ligand>
</feature>
<feature type="binding site" evidence="3">
    <location>
        <position position="52"/>
    </location>
    <ligand>
        <name>Zn(2+)</name>
        <dbReference type="ChEBI" id="CHEBI:29105"/>
        <label>1</label>
    </ligand>
</feature>
<feature type="binding site" evidence="3">
    <location>
        <position position="55"/>
    </location>
    <ligand>
        <name>Zn(2+)</name>
        <dbReference type="ChEBI" id="CHEBI:29105"/>
        <label>1</label>
    </ligand>
</feature>
<feature type="binding site" evidence="3">
    <location>
        <position position="65"/>
    </location>
    <ligand>
        <name>Zn(2+)</name>
        <dbReference type="ChEBI" id="CHEBI:29105"/>
        <label>2</label>
    </ligand>
</feature>
<feature type="binding site" evidence="3">
    <location>
        <position position="68"/>
    </location>
    <ligand>
        <name>Zn(2+)</name>
        <dbReference type="ChEBI" id="CHEBI:29105"/>
        <label>2</label>
    </ligand>
</feature>
<feature type="binding site" evidence="3">
    <location>
        <position position="74"/>
    </location>
    <ligand>
        <name>Zn(2+)</name>
        <dbReference type="ChEBI" id="CHEBI:29105"/>
        <label>1</label>
    </ligand>
</feature>
<feature type="binding site" evidence="3">
    <location>
        <position position="78"/>
    </location>
    <ligand>
        <name>Zn(2+)</name>
        <dbReference type="ChEBI" id="CHEBI:29105"/>
        <label>1</label>
    </ligand>
</feature>
<feature type="binding site" evidence="3">
    <location>
        <position position="86"/>
    </location>
    <ligand>
        <name>Zn(2+)</name>
        <dbReference type="ChEBI" id="CHEBI:29105"/>
        <label>2</label>
    </ligand>
</feature>
<feature type="binding site" evidence="3">
    <location>
        <position position="90"/>
    </location>
    <ligand>
        <name>Zn(2+)</name>
        <dbReference type="ChEBI" id="CHEBI:29105"/>
        <label>2</label>
    </ligand>
</feature>
<feature type="binding site" evidence="4">
    <location>
        <position position="137"/>
    </location>
    <ligand>
        <name>S-adenosyl-L-methionine</name>
        <dbReference type="ChEBI" id="CHEBI:59789"/>
    </ligand>
</feature>
<feature type="binding site" evidence="1">
    <location>
        <begin position="206"/>
        <end position="207"/>
    </location>
    <ligand>
        <name>S-adenosyl-L-methionine</name>
        <dbReference type="ChEBI" id="CHEBI:59789"/>
    </ligand>
</feature>
<feature type="binding site" evidence="1">
    <location>
        <begin position="258"/>
        <end position="260"/>
    </location>
    <ligand>
        <name>S-adenosyl-L-methionine</name>
        <dbReference type="ChEBI" id="CHEBI:59789"/>
    </ligand>
</feature>
<feature type="modified residue" description="Phosphoserine" evidence="2">
    <location>
        <position position="283"/>
    </location>
</feature>
<feature type="mutagenesis site" description="Abolishes methyltransferase activity." evidence="5">
    <original>Y</original>
    <variation>F</variation>
    <location>
        <position position="240"/>
    </location>
</feature>
<feature type="strand" evidence="10">
    <location>
        <begin position="9"/>
        <end position="13"/>
    </location>
</feature>
<feature type="strand" evidence="10">
    <location>
        <begin position="19"/>
        <end position="25"/>
    </location>
</feature>
<feature type="strand" evidence="10">
    <location>
        <begin position="32"/>
        <end position="37"/>
    </location>
</feature>
<feature type="strand" evidence="10">
    <location>
        <begin position="39"/>
        <end position="43"/>
    </location>
</feature>
<feature type="helix" evidence="10">
    <location>
        <begin position="45"/>
        <end position="47"/>
    </location>
</feature>
<feature type="turn" evidence="10">
    <location>
        <begin position="48"/>
        <end position="50"/>
    </location>
</feature>
<feature type="turn" evidence="10">
    <location>
        <begin position="53"/>
        <end position="55"/>
    </location>
</feature>
<feature type="turn" evidence="10">
    <location>
        <begin position="66"/>
        <end position="68"/>
    </location>
</feature>
<feature type="strand" evidence="10">
    <location>
        <begin position="72"/>
        <end position="75"/>
    </location>
</feature>
<feature type="helix" evidence="10">
    <location>
        <begin position="76"/>
        <end position="86"/>
    </location>
</feature>
<feature type="turn" evidence="10">
    <location>
        <begin position="87"/>
        <end position="89"/>
    </location>
</feature>
<feature type="helix" evidence="10">
    <location>
        <begin position="90"/>
        <end position="95"/>
    </location>
</feature>
<feature type="helix" evidence="10">
    <location>
        <begin position="104"/>
        <end position="118"/>
    </location>
</feature>
<feature type="helix" evidence="10">
    <location>
        <begin position="124"/>
        <end position="126"/>
    </location>
</feature>
<feature type="helix" evidence="10">
    <location>
        <begin position="131"/>
        <end position="133"/>
    </location>
</feature>
<feature type="helix" evidence="10">
    <location>
        <begin position="138"/>
        <end position="140"/>
    </location>
</feature>
<feature type="helix" evidence="10">
    <location>
        <begin position="143"/>
        <end position="160"/>
    </location>
</feature>
<feature type="turn" evidence="10">
    <location>
        <begin position="161"/>
        <end position="163"/>
    </location>
</feature>
<feature type="helix" evidence="10">
    <location>
        <begin position="169"/>
        <end position="182"/>
    </location>
</feature>
<feature type="strand" evidence="10">
    <location>
        <begin position="184"/>
        <end position="187"/>
    </location>
</feature>
<feature type="strand" evidence="10">
    <location>
        <begin position="193"/>
        <end position="198"/>
    </location>
</feature>
<feature type="helix" evidence="10">
    <location>
        <begin position="202"/>
        <end position="204"/>
    </location>
</feature>
<feature type="strand" evidence="10">
    <location>
        <begin position="205"/>
        <end position="207"/>
    </location>
</feature>
<feature type="strand" evidence="10">
    <location>
        <begin position="212"/>
        <end position="218"/>
    </location>
</feature>
<feature type="strand" evidence="10">
    <location>
        <begin position="221"/>
        <end position="228"/>
    </location>
</feature>
<feature type="strand" evidence="10">
    <location>
        <begin position="235"/>
        <end position="238"/>
    </location>
</feature>
<feature type="helix" evidence="10">
    <location>
        <begin position="247"/>
        <end position="258"/>
    </location>
</feature>
<feature type="helix" evidence="10">
    <location>
        <begin position="265"/>
        <end position="269"/>
    </location>
</feature>
<feature type="helix" evidence="10">
    <location>
        <begin position="273"/>
        <end position="276"/>
    </location>
</feature>
<feature type="helix" evidence="10">
    <location>
        <begin position="288"/>
        <end position="308"/>
    </location>
</feature>
<feature type="turn" evidence="10">
    <location>
        <begin position="309"/>
        <end position="311"/>
    </location>
</feature>
<feature type="helix" evidence="10">
    <location>
        <begin position="314"/>
        <end position="328"/>
    </location>
</feature>
<feature type="turn" evidence="10">
    <location>
        <begin position="329"/>
        <end position="331"/>
    </location>
</feature>
<feature type="helix" evidence="10">
    <location>
        <begin position="337"/>
        <end position="352"/>
    </location>
</feature>
<feature type="helix" evidence="10">
    <location>
        <begin position="356"/>
        <end position="373"/>
    </location>
</feature>
<feature type="helix" evidence="10">
    <location>
        <begin position="379"/>
        <end position="394"/>
    </location>
</feature>
<feature type="helix" evidence="10">
    <location>
        <begin position="398"/>
        <end position="415"/>
    </location>
</feature>
<feature type="helix" evidence="10">
    <location>
        <begin position="421"/>
        <end position="431"/>
    </location>
</feature>
<keyword id="KW-0002">3D-structure</keyword>
<keyword id="KW-0156">Chromatin regulator</keyword>
<keyword id="KW-0963">Cytoplasm</keyword>
<keyword id="KW-0479">Metal-binding</keyword>
<keyword id="KW-0489">Methyltransferase</keyword>
<keyword id="KW-0539">Nucleus</keyword>
<keyword id="KW-0597">Phosphoprotein</keyword>
<keyword id="KW-1185">Reference proteome</keyword>
<keyword id="KW-0949">S-adenosyl-L-methionine</keyword>
<keyword id="KW-0804">Transcription</keyword>
<keyword id="KW-0805">Transcription regulation</keyword>
<keyword id="KW-0808">Transferase</keyword>
<keyword id="KW-0862">Zinc</keyword>
<keyword id="KW-0863">Zinc-finger</keyword>
<comment type="function">
    <text evidence="2 5">Protein-lysine N-methyltransferase that methylates both histones and non-histone proteins, including p53/TP53 and RB1. Specifically trimethylates histone H3 'Lys-4' (H3K4me3) in vivo. The activity requires interaction with HSP90alpha. Shows even higher methyltransferase activity on p53/TP53. Monomethylates 'Lys-370' of p53/TP53, leading to decreased DNA-binding activity and subsequent transcriptional regulation activity of p53/TP53. Monomethylates RB1 at 'Lys-860'.</text>
</comment>
<comment type="catalytic activity">
    <reaction evidence="2">
        <text>L-lysyl(4)-[histone H3] + 3 S-adenosyl-L-methionine = N(6),N(6),N(6)-trimethyl-L-lysyl(4)-[histone H3] + 3 S-adenosyl-L-homocysteine + 3 H(+)</text>
        <dbReference type="Rhea" id="RHEA:60260"/>
        <dbReference type="Rhea" id="RHEA-COMP:15537"/>
        <dbReference type="Rhea" id="RHEA-COMP:15547"/>
        <dbReference type="ChEBI" id="CHEBI:15378"/>
        <dbReference type="ChEBI" id="CHEBI:29969"/>
        <dbReference type="ChEBI" id="CHEBI:57856"/>
        <dbReference type="ChEBI" id="CHEBI:59789"/>
        <dbReference type="ChEBI" id="CHEBI:61961"/>
        <dbReference type="EC" id="2.1.1.354"/>
    </reaction>
</comment>
<comment type="catalytic activity">
    <reaction evidence="2">
        <text>L-lysyl-[protein] + S-adenosyl-L-methionine = N(6)-methyl-L-lysyl-[protein] + S-adenosyl-L-homocysteine + H(+)</text>
        <dbReference type="Rhea" id="RHEA:51736"/>
        <dbReference type="Rhea" id="RHEA-COMP:9752"/>
        <dbReference type="Rhea" id="RHEA-COMP:13053"/>
        <dbReference type="ChEBI" id="CHEBI:15378"/>
        <dbReference type="ChEBI" id="CHEBI:29969"/>
        <dbReference type="ChEBI" id="CHEBI:57856"/>
        <dbReference type="ChEBI" id="CHEBI:59789"/>
        <dbReference type="ChEBI" id="CHEBI:61929"/>
    </reaction>
</comment>
<comment type="subunit">
    <text evidence="1 5 7">Interacts (via MYND-type zinc finger) with EPB41L3. Interacts (via SET domain) with p53/TP53. Interacts with RB1 and HSP90AA1 (By similarity). Interacts with RNA polymerase II and HELZ. Interacts with SIN3A and HDAC1.</text>
</comment>
<comment type="interaction">
    <interactant intactId="EBI-15612527">
        <id>Q8R5A0</id>
    </interactant>
    <interactant intactId="EBI-366083">
        <id>P04637</id>
        <label>TP53</label>
    </interactant>
    <organismsDiffer>true</organismsDiffer>
    <experiments>3</experiments>
</comment>
<comment type="subcellular location">
    <subcellularLocation>
        <location>Cytoplasm</location>
        <location>Cytosol</location>
    </subcellularLocation>
    <subcellularLocation>
        <location>Nucleus</location>
    </subcellularLocation>
</comment>
<comment type="tissue specificity">
    <text evidence="7">Highly expressed in heart, skeletal muscle and brain tissue. During cardiac development, it is differentially expressed with highest expression in the neonatal heart while very low expression is detected at 12.5 dpc and adult. Specifically expressed in cardiomyocytes (at protein level).</text>
</comment>
<comment type="miscellaneous">
    <text evidence="9">Although specifically expressed in cardiomyocytes, a conditional deletion in heart does not lead to any visible phenotype.</text>
</comment>
<comment type="similarity">
    <text evidence="4">Belongs to the class V-like SAM-binding methyltransferase superfamily.</text>
</comment>
<comment type="caution">
    <text evidence="6">The protein was previously thought to dimethylate histone 3 'Lys-36', but this is now known not to take place in vivo.</text>
</comment>
<comment type="sequence caution" evidence="8">
    <conflict type="miscellaneous discrepancy">
        <sequence resource="EMBL-CDS" id="BAE29912"/>
    </conflict>
    <text>Deletion within an exon that does not correspond to an intron.</text>
</comment>
<organism>
    <name type="scientific">Mus musculus</name>
    <name type="common">Mouse</name>
    <dbReference type="NCBI Taxonomy" id="10090"/>
    <lineage>
        <taxon>Eukaryota</taxon>
        <taxon>Metazoa</taxon>
        <taxon>Chordata</taxon>
        <taxon>Craniata</taxon>
        <taxon>Vertebrata</taxon>
        <taxon>Euteleostomi</taxon>
        <taxon>Mammalia</taxon>
        <taxon>Eutheria</taxon>
        <taxon>Euarchontoglires</taxon>
        <taxon>Glires</taxon>
        <taxon>Rodentia</taxon>
        <taxon>Myomorpha</taxon>
        <taxon>Muroidea</taxon>
        <taxon>Muridae</taxon>
        <taxon>Murinae</taxon>
        <taxon>Mus</taxon>
        <taxon>Mus</taxon>
    </lineage>
</organism>
<name>SMYD2_MOUSE</name>
<evidence type="ECO:0000250" key="1"/>
<evidence type="ECO:0000250" key="2">
    <source>
        <dbReference type="UniProtKB" id="Q9NRG4"/>
    </source>
</evidence>
<evidence type="ECO:0000255" key="3">
    <source>
        <dbReference type="PROSITE-ProRule" id="PRU00134"/>
    </source>
</evidence>
<evidence type="ECO:0000255" key="4">
    <source>
        <dbReference type="PROSITE-ProRule" id="PRU00190"/>
    </source>
</evidence>
<evidence type="ECO:0000269" key="5">
    <source>
    </source>
</evidence>
<evidence type="ECO:0000269" key="6">
    <source>
    </source>
</evidence>
<evidence type="ECO:0000269" key="7">
    <source>
    </source>
</evidence>
<evidence type="ECO:0000305" key="8"/>
<evidence type="ECO:0000305" key="9">
    <source>
    </source>
</evidence>
<evidence type="ECO:0007829" key="10">
    <source>
        <dbReference type="PDB" id="3QWW"/>
    </source>
</evidence>